<comment type="function">
    <text evidence="1">With CysN forms the ATP sulfurylase (ATPS) that catalyzes the adenylation of sulfate producing adenosine 5'-phosphosulfate (APS) and diphosphate, the first enzymatic step in sulfur assimilation pathway. APS synthesis involves the formation of a high-energy phosphoric-sulfuric acid anhydride bond driven by GTP hydrolysis by CysN coupled to ATP hydrolysis by CysD.</text>
</comment>
<comment type="catalytic activity">
    <reaction evidence="1">
        <text>sulfate + ATP + H(+) = adenosine 5'-phosphosulfate + diphosphate</text>
        <dbReference type="Rhea" id="RHEA:18133"/>
        <dbReference type="ChEBI" id="CHEBI:15378"/>
        <dbReference type="ChEBI" id="CHEBI:16189"/>
        <dbReference type="ChEBI" id="CHEBI:30616"/>
        <dbReference type="ChEBI" id="CHEBI:33019"/>
        <dbReference type="ChEBI" id="CHEBI:58243"/>
        <dbReference type="EC" id="2.7.7.4"/>
    </reaction>
</comment>
<comment type="pathway">
    <text evidence="1">Sulfur metabolism; hydrogen sulfide biosynthesis; sulfite from sulfate: step 1/3.</text>
</comment>
<comment type="subunit">
    <text evidence="1">Heterodimer composed of CysD, the smaller subunit, and CysN.</text>
</comment>
<comment type="similarity">
    <text evidence="1">Belongs to the PAPS reductase family. CysD subfamily.</text>
</comment>
<sequence length="302" mass="35188">MDQIRLTHLRQLEAESIHIIREVAAEFSNPVMLYSIGKDSSVMLHLARKAFYPGTLPFPLLHVDTGWKFREMYEFRDRTAKAYGCELLVHKNPEGVAMGINPFVHGSAKHTDIMKTEGLKQALNKYGFDAAFGGARRDEEKSRAKERIYSFRDRFHRWDPKNQRPELWHNYNGQINKGESIRVFPLSNWTEQDIWQYIWLENIDIVPLYLAAERPVLERDGMLMMIDDNRIDLQPGEVIKKRMVRFRTLGCWPLTGAVESNAQTLPEIIEEMLVSTTSERQGRVIDRDQAGSMELKKRQGYF</sequence>
<keyword id="KW-0067">ATP-binding</keyword>
<keyword id="KW-0547">Nucleotide-binding</keyword>
<keyword id="KW-0548">Nucleotidyltransferase</keyword>
<keyword id="KW-0808">Transferase</keyword>
<accession>B1IUS7</accession>
<dbReference type="EC" id="2.7.7.4" evidence="1"/>
<dbReference type="EMBL" id="CP000946">
    <property type="protein sequence ID" value="ACA76629.1"/>
    <property type="molecule type" value="Genomic_DNA"/>
</dbReference>
<dbReference type="RefSeq" id="WP_000372108.1">
    <property type="nucleotide sequence ID" value="NZ_MTFT01000049.1"/>
</dbReference>
<dbReference type="SMR" id="B1IUS7"/>
<dbReference type="GeneID" id="93779254"/>
<dbReference type="KEGG" id="ecl:EcolC_0960"/>
<dbReference type="HOGENOM" id="CLU_043026_0_0_6"/>
<dbReference type="UniPathway" id="UPA00140">
    <property type="reaction ID" value="UER00204"/>
</dbReference>
<dbReference type="GO" id="GO:0005524">
    <property type="term" value="F:ATP binding"/>
    <property type="evidence" value="ECO:0007669"/>
    <property type="project" value="UniProtKB-KW"/>
</dbReference>
<dbReference type="GO" id="GO:0004781">
    <property type="term" value="F:sulfate adenylyltransferase (ATP) activity"/>
    <property type="evidence" value="ECO:0007669"/>
    <property type="project" value="UniProtKB-UniRule"/>
</dbReference>
<dbReference type="GO" id="GO:0070814">
    <property type="term" value="P:hydrogen sulfide biosynthetic process"/>
    <property type="evidence" value="ECO:0007669"/>
    <property type="project" value="UniProtKB-UniRule"/>
</dbReference>
<dbReference type="GO" id="GO:0000103">
    <property type="term" value="P:sulfate assimilation"/>
    <property type="evidence" value="ECO:0007669"/>
    <property type="project" value="UniProtKB-UniRule"/>
</dbReference>
<dbReference type="CDD" id="cd23946">
    <property type="entry name" value="Sulfate_adenylyltransferase_2"/>
    <property type="match status" value="1"/>
</dbReference>
<dbReference type="FunFam" id="3.40.50.620:FF:000002">
    <property type="entry name" value="Sulfate adenylyltransferase subunit 2"/>
    <property type="match status" value="1"/>
</dbReference>
<dbReference type="Gene3D" id="3.40.50.620">
    <property type="entry name" value="HUPs"/>
    <property type="match status" value="1"/>
</dbReference>
<dbReference type="HAMAP" id="MF_00064">
    <property type="entry name" value="Sulf_adenylyltr_sub2"/>
    <property type="match status" value="1"/>
</dbReference>
<dbReference type="InterPro" id="IPR002500">
    <property type="entry name" value="PAPS_reduct_dom"/>
</dbReference>
<dbReference type="InterPro" id="IPR014729">
    <property type="entry name" value="Rossmann-like_a/b/a_fold"/>
</dbReference>
<dbReference type="InterPro" id="IPR011784">
    <property type="entry name" value="SO4_adenylTrfase_ssu"/>
</dbReference>
<dbReference type="InterPro" id="IPR050128">
    <property type="entry name" value="Sulfate_adenylyltrnsfr_sub2"/>
</dbReference>
<dbReference type="NCBIfam" id="TIGR02039">
    <property type="entry name" value="CysD"/>
    <property type="match status" value="1"/>
</dbReference>
<dbReference type="NCBIfam" id="NF003587">
    <property type="entry name" value="PRK05253.1"/>
    <property type="match status" value="1"/>
</dbReference>
<dbReference type="NCBIfam" id="NF009214">
    <property type="entry name" value="PRK12563.1"/>
    <property type="match status" value="1"/>
</dbReference>
<dbReference type="PANTHER" id="PTHR43196">
    <property type="entry name" value="SULFATE ADENYLYLTRANSFERASE SUBUNIT 2"/>
    <property type="match status" value="1"/>
</dbReference>
<dbReference type="PANTHER" id="PTHR43196:SF1">
    <property type="entry name" value="SULFATE ADENYLYLTRANSFERASE SUBUNIT 2"/>
    <property type="match status" value="1"/>
</dbReference>
<dbReference type="Pfam" id="PF01507">
    <property type="entry name" value="PAPS_reduct"/>
    <property type="match status" value="1"/>
</dbReference>
<dbReference type="PIRSF" id="PIRSF002936">
    <property type="entry name" value="CysDAde_trans"/>
    <property type="match status" value="1"/>
</dbReference>
<dbReference type="SUPFAM" id="SSF52402">
    <property type="entry name" value="Adenine nucleotide alpha hydrolases-like"/>
    <property type="match status" value="1"/>
</dbReference>
<organism>
    <name type="scientific">Escherichia coli (strain ATCC 8739 / DSM 1576 / NBRC 3972 / NCIMB 8545 / WDCM 00012 / Crooks)</name>
    <dbReference type="NCBI Taxonomy" id="481805"/>
    <lineage>
        <taxon>Bacteria</taxon>
        <taxon>Pseudomonadati</taxon>
        <taxon>Pseudomonadota</taxon>
        <taxon>Gammaproteobacteria</taxon>
        <taxon>Enterobacterales</taxon>
        <taxon>Enterobacteriaceae</taxon>
        <taxon>Escherichia</taxon>
    </lineage>
</organism>
<evidence type="ECO:0000255" key="1">
    <source>
        <dbReference type="HAMAP-Rule" id="MF_00064"/>
    </source>
</evidence>
<gene>
    <name evidence="1" type="primary">cysD</name>
    <name type="ordered locus">EcolC_0960</name>
</gene>
<protein>
    <recommendedName>
        <fullName evidence="1">Sulfate adenylyltransferase subunit 2</fullName>
        <ecNumber evidence="1">2.7.7.4</ecNumber>
    </recommendedName>
    <alternativeName>
        <fullName evidence="1">ATP-sulfurylase small subunit</fullName>
    </alternativeName>
    <alternativeName>
        <fullName evidence="1">Sulfate adenylate transferase</fullName>
        <shortName evidence="1">SAT</shortName>
    </alternativeName>
</protein>
<proteinExistence type="inferred from homology"/>
<reference key="1">
    <citation type="submission" date="2008-02" db="EMBL/GenBank/DDBJ databases">
        <title>Complete sequence of Escherichia coli C str. ATCC 8739.</title>
        <authorList>
            <person name="Copeland A."/>
            <person name="Lucas S."/>
            <person name="Lapidus A."/>
            <person name="Glavina del Rio T."/>
            <person name="Dalin E."/>
            <person name="Tice H."/>
            <person name="Bruce D."/>
            <person name="Goodwin L."/>
            <person name="Pitluck S."/>
            <person name="Kiss H."/>
            <person name="Brettin T."/>
            <person name="Detter J.C."/>
            <person name="Han C."/>
            <person name="Kuske C.R."/>
            <person name="Schmutz J."/>
            <person name="Larimer F."/>
            <person name="Land M."/>
            <person name="Hauser L."/>
            <person name="Kyrpides N."/>
            <person name="Mikhailova N."/>
            <person name="Ingram L."/>
            <person name="Richardson P."/>
        </authorList>
    </citation>
    <scope>NUCLEOTIDE SEQUENCE [LARGE SCALE GENOMIC DNA]</scope>
    <source>
        <strain>ATCC 8739 / DSM 1576 / NBRC 3972 / NCIMB 8545 / WDCM 00012 / Crooks</strain>
    </source>
</reference>
<name>CYSD_ECOLC</name>
<feature type="chain" id="PRO_1000075078" description="Sulfate adenylyltransferase subunit 2">
    <location>
        <begin position="1"/>
        <end position="302"/>
    </location>
</feature>